<name>MDHM_MACFA</name>
<proteinExistence type="evidence at transcript level"/>
<accession>Q4R568</accession>
<organism>
    <name type="scientific">Macaca fascicularis</name>
    <name type="common">Crab-eating macaque</name>
    <name type="synonym">Cynomolgus monkey</name>
    <dbReference type="NCBI Taxonomy" id="9541"/>
    <lineage>
        <taxon>Eukaryota</taxon>
        <taxon>Metazoa</taxon>
        <taxon>Chordata</taxon>
        <taxon>Craniata</taxon>
        <taxon>Vertebrata</taxon>
        <taxon>Euteleostomi</taxon>
        <taxon>Mammalia</taxon>
        <taxon>Eutheria</taxon>
        <taxon>Euarchontoglires</taxon>
        <taxon>Primates</taxon>
        <taxon>Haplorrhini</taxon>
        <taxon>Catarrhini</taxon>
        <taxon>Cercopithecidae</taxon>
        <taxon>Cercopithecinae</taxon>
        <taxon>Macaca</taxon>
    </lineage>
</organism>
<evidence type="ECO:0000250" key="1">
    <source>
        <dbReference type="UniProtKB" id="P00346"/>
    </source>
</evidence>
<evidence type="ECO:0000250" key="2">
    <source>
        <dbReference type="UniProtKB" id="P04636"/>
    </source>
</evidence>
<evidence type="ECO:0000250" key="3">
    <source>
        <dbReference type="UniProtKB" id="P08249"/>
    </source>
</evidence>
<evidence type="ECO:0000250" key="4">
    <source>
        <dbReference type="UniProtKB" id="P40926"/>
    </source>
</evidence>
<evidence type="ECO:0000250" key="5">
    <source>
        <dbReference type="UniProtKB" id="Q32LG3"/>
    </source>
</evidence>
<evidence type="ECO:0000255" key="6">
    <source>
        <dbReference type="PROSITE-ProRule" id="PRU10004"/>
    </source>
</evidence>
<evidence type="ECO:0000305" key="7"/>
<reference key="1">
    <citation type="submission" date="2005-06" db="EMBL/GenBank/DDBJ databases">
        <title>DNA sequences of macaque genes expressed in brain or testis and its evolutionary implications.</title>
        <authorList>
            <consortium name="International consortium for macaque cDNA sequencing and analysis"/>
        </authorList>
    </citation>
    <scope>NUCLEOTIDE SEQUENCE [LARGE SCALE MRNA]</scope>
    <source>
        <tissue>Brain cortex</tissue>
    </source>
</reference>
<sequence>MLSALARPASAALRRSFSTSAQNNAKVAVLGASGGIGQPLSLLLKNSPLVSRLTLYDIAHTPGVAADLSHIETKAVVKGYLGPEQLPDCLKGCDVVVIPAGVPRKPGMTRDDLFNTNATIVATLAAACAQHRPEAMICIIANPVNSTIPITAEVFKKHGVYNPSKIFGVTTLDIVRANTFVAELKGLDPARVNVPVIGGHAGKTIIPLISQCTPKVDFPQDQLTALTGRIQEAGTEVVKAKAGAGSATLSMAYAGARFVFSLVDAMNGKEGVVECSFVKSQETECTYFSTPLLLGKKGIEKNLGIGQIPSFEEKMISDAIPELKASIKKGEDFVKTLK</sequence>
<comment type="catalytic activity">
    <reaction evidence="6">
        <text>(S)-malate + NAD(+) = oxaloacetate + NADH + H(+)</text>
        <dbReference type="Rhea" id="RHEA:21432"/>
        <dbReference type="ChEBI" id="CHEBI:15378"/>
        <dbReference type="ChEBI" id="CHEBI:15589"/>
        <dbReference type="ChEBI" id="CHEBI:16452"/>
        <dbReference type="ChEBI" id="CHEBI:57540"/>
        <dbReference type="ChEBI" id="CHEBI:57945"/>
        <dbReference type="EC" id="1.1.1.37"/>
    </reaction>
</comment>
<comment type="activity regulation">
    <text evidence="4">Enzyme activity is enhanced by acetylation.</text>
</comment>
<comment type="subunit">
    <text evidence="1">Homodimer.</text>
</comment>
<comment type="subcellular location">
    <subcellularLocation>
        <location evidence="2">Mitochondrion matrix</location>
    </subcellularLocation>
</comment>
<comment type="PTM">
    <text evidence="4">Acetylation is enhanced after treatment either with trichostin A (TCA) or with nicotinamide (NAM) with the appearance of tri- and tetraacetylations. Glucose also increases acetylation.</text>
</comment>
<comment type="similarity">
    <text evidence="7">Belongs to the LDH/MDH superfamily. MDH type 1 family.</text>
</comment>
<feature type="transit peptide" description="Mitochondrion" evidence="1">
    <location>
        <begin position="1"/>
        <end position="24"/>
    </location>
</feature>
<feature type="chain" id="PRO_0000285846" description="Malate dehydrogenase, mitochondrial">
    <location>
        <begin position="25"/>
        <end position="338"/>
    </location>
</feature>
<feature type="active site" description="Proton acceptor" evidence="1">
    <location>
        <position position="200"/>
    </location>
</feature>
<feature type="binding site" evidence="4">
    <location>
        <begin position="31"/>
        <end position="37"/>
    </location>
    <ligand>
        <name>NAD(+)</name>
        <dbReference type="ChEBI" id="CHEBI:57540"/>
    </ligand>
</feature>
<feature type="binding site" evidence="4">
    <location>
        <position position="57"/>
    </location>
    <ligand>
        <name>NAD(+)</name>
        <dbReference type="ChEBI" id="CHEBI:57540"/>
    </ligand>
</feature>
<feature type="binding site" evidence="6">
    <location>
        <position position="104"/>
    </location>
    <ligand>
        <name>substrate</name>
    </ligand>
</feature>
<feature type="binding site" evidence="6">
    <location>
        <position position="110"/>
    </location>
    <ligand>
        <name>substrate</name>
    </ligand>
</feature>
<feature type="binding site" evidence="4">
    <location>
        <position position="117"/>
    </location>
    <ligand>
        <name>NAD(+)</name>
        <dbReference type="ChEBI" id="CHEBI:57540"/>
    </ligand>
</feature>
<feature type="binding site" evidence="4">
    <location>
        <begin position="140"/>
        <end position="142"/>
    </location>
    <ligand>
        <name>NAD(+)</name>
        <dbReference type="ChEBI" id="CHEBI:57540"/>
    </ligand>
</feature>
<feature type="binding site" evidence="6">
    <location>
        <position position="142"/>
    </location>
    <ligand>
        <name>substrate</name>
    </ligand>
</feature>
<feature type="binding site" evidence="6">
    <location>
        <position position="176"/>
    </location>
    <ligand>
        <name>substrate</name>
    </ligand>
</feature>
<feature type="binding site" evidence="4">
    <location>
        <position position="251"/>
    </location>
    <ligand>
        <name>NAD(+)</name>
        <dbReference type="ChEBI" id="CHEBI:57540"/>
    </ligand>
</feature>
<feature type="modified residue" description="N6-acetyllysine; alternate" evidence="3">
    <location>
        <position position="78"/>
    </location>
</feature>
<feature type="modified residue" description="N6-succinyllysine; alternate" evidence="3">
    <location>
        <position position="78"/>
    </location>
</feature>
<feature type="modified residue" description="N6-acetyllysine; alternate" evidence="3">
    <location>
        <position position="91"/>
    </location>
</feature>
<feature type="modified residue" description="N6-succinyllysine; alternate" evidence="3">
    <location>
        <position position="91"/>
    </location>
</feature>
<feature type="modified residue" description="N6-acetyllysine" evidence="4">
    <location>
        <position position="165"/>
    </location>
</feature>
<feature type="modified residue" description="N6-acetyllysine; alternate" evidence="5">
    <location>
        <position position="185"/>
    </location>
</feature>
<feature type="modified residue" description="N6-succinyllysine; alternate" evidence="3">
    <location>
        <position position="185"/>
    </location>
</feature>
<feature type="modified residue" description="N6-succinyllysine" evidence="3">
    <location>
        <position position="203"/>
    </location>
</feature>
<feature type="modified residue" description="N6-acetyllysine; alternate" evidence="3">
    <location>
        <position position="215"/>
    </location>
</feature>
<feature type="modified residue" description="N6-succinyllysine; alternate" evidence="3">
    <location>
        <position position="215"/>
    </location>
</feature>
<feature type="modified residue" description="N6-acetyllysine; alternate" evidence="3">
    <location>
        <position position="239"/>
    </location>
</feature>
<feature type="modified residue" description="N6-malonyllysine; alternate" evidence="5">
    <location>
        <position position="239"/>
    </location>
</feature>
<feature type="modified residue" description="N6-succinyllysine; alternate" evidence="5">
    <location>
        <position position="239"/>
    </location>
</feature>
<feature type="modified residue" description="Phosphoserine" evidence="4">
    <location>
        <position position="246"/>
    </location>
</feature>
<feature type="modified residue" description="N6-succinyllysine" evidence="3">
    <location>
        <position position="269"/>
    </location>
</feature>
<feature type="modified residue" description="N6-acetyllysine; alternate" evidence="3">
    <location>
        <position position="296"/>
    </location>
</feature>
<feature type="modified residue" description="N6-succinyllysine; alternate" evidence="3">
    <location>
        <position position="296"/>
    </location>
</feature>
<feature type="modified residue" description="N6-acetyllysine; alternate" evidence="4">
    <location>
        <position position="301"/>
    </location>
</feature>
<feature type="modified residue" description="N6-succinyllysine; alternate" evidence="5">
    <location>
        <position position="301"/>
    </location>
</feature>
<feature type="modified residue" description="N6-acetyllysine; alternate" evidence="5">
    <location>
        <position position="314"/>
    </location>
</feature>
<feature type="modified residue" description="N6-succinyllysine; alternate" evidence="3">
    <location>
        <position position="314"/>
    </location>
</feature>
<feature type="modified residue" description="N6-acetyllysine; alternate" evidence="3">
    <location>
        <position position="324"/>
    </location>
</feature>
<feature type="modified residue" description="N6-succinyllysine; alternate" evidence="3">
    <location>
        <position position="324"/>
    </location>
</feature>
<feature type="modified residue" description="Phosphoserine" evidence="4">
    <location>
        <position position="326"/>
    </location>
</feature>
<feature type="modified residue" description="N6-acetyllysine; alternate" evidence="5">
    <location>
        <position position="328"/>
    </location>
</feature>
<feature type="modified residue" description="N6-succinyllysine; alternate" evidence="5">
    <location>
        <position position="328"/>
    </location>
</feature>
<feature type="modified residue" description="N6-acetyllysine; alternate" evidence="4">
    <location>
        <position position="329"/>
    </location>
</feature>
<feature type="modified residue" description="N6-malonyllysine; alternate" evidence="5">
    <location>
        <position position="329"/>
    </location>
</feature>
<feature type="modified residue" description="N6-acetyllysine; alternate" evidence="4">
    <location>
        <position position="335"/>
    </location>
</feature>
<feature type="modified residue" description="N6-succinyllysine; alternate" evidence="3">
    <location>
        <position position="335"/>
    </location>
</feature>
<feature type="glycosylation site" description="O-linked (GlcNAc) serine" evidence="2">
    <location>
        <position position="33"/>
    </location>
</feature>
<dbReference type="EC" id="1.1.1.37"/>
<dbReference type="EMBL" id="AB169676">
    <property type="protein sequence ID" value="BAE01757.1"/>
    <property type="molecule type" value="mRNA"/>
</dbReference>
<dbReference type="RefSeq" id="NP_001270089.1">
    <property type="nucleotide sequence ID" value="NM_001283160.1"/>
</dbReference>
<dbReference type="SMR" id="Q4R568"/>
<dbReference type="STRING" id="9541.ENSMFAP00000011294"/>
<dbReference type="GlyCosmos" id="Q4R568">
    <property type="glycosylation" value="1 site, No reported glycans"/>
</dbReference>
<dbReference type="eggNOG" id="KOG1494">
    <property type="taxonomic scope" value="Eukaryota"/>
</dbReference>
<dbReference type="Proteomes" id="UP000233100">
    <property type="component" value="Unplaced"/>
</dbReference>
<dbReference type="GO" id="GO:0005759">
    <property type="term" value="C:mitochondrial matrix"/>
    <property type="evidence" value="ECO:0000250"/>
    <property type="project" value="UniProtKB"/>
</dbReference>
<dbReference type="GO" id="GO:0030060">
    <property type="term" value="F:L-malate dehydrogenase (NAD+) activity"/>
    <property type="evidence" value="ECO:0000250"/>
    <property type="project" value="UniProtKB"/>
</dbReference>
<dbReference type="GO" id="GO:0042803">
    <property type="term" value="F:protein homodimerization activity"/>
    <property type="evidence" value="ECO:0000250"/>
    <property type="project" value="UniProtKB"/>
</dbReference>
<dbReference type="GO" id="GO:0009060">
    <property type="term" value="P:aerobic respiration"/>
    <property type="evidence" value="ECO:0000250"/>
    <property type="project" value="UniProtKB"/>
</dbReference>
<dbReference type="GO" id="GO:0006108">
    <property type="term" value="P:malate metabolic process"/>
    <property type="evidence" value="ECO:0007669"/>
    <property type="project" value="InterPro"/>
</dbReference>
<dbReference type="GO" id="GO:0006734">
    <property type="term" value="P:NADH metabolic process"/>
    <property type="evidence" value="ECO:0007669"/>
    <property type="project" value="UniProtKB-ARBA"/>
</dbReference>
<dbReference type="GO" id="GO:0006099">
    <property type="term" value="P:tricarboxylic acid cycle"/>
    <property type="evidence" value="ECO:0007669"/>
    <property type="project" value="UniProtKB-KW"/>
</dbReference>
<dbReference type="CDD" id="cd01337">
    <property type="entry name" value="MDH_glyoxysomal_mitochondrial"/>
    <property type="match status" value="1"/>
</dbReference>
<dbReference type="FunFam" id="3.40.50.720:FF:000013">
    <property type="entry name" value="Malate dehydrogenase"/>
    <property type="match status" value="1"/>
</dbReference>
<dbReference type="FunFam" id="3.90.110.10:FF:000001">
    <property type="entry name" value="Malate dehydrogenase"/>
    <property type="match status" value="1"/>
</dbReference>
<dbReference type="Gene3D" id="3.90.110.10">
    <property type="entry name" value="Lactate dehydrogenase/glycoside hydrolase, family 4, C-terminal"/>
    <property type="match status" value="1"/>
</dbReference>
<dbReference type="Gene3D" id="3.40.50.720">
    <property type="entry name" value="NAD(P)-binding Rossmann-like Domain"/>
    <property type="match status" value="1"/>
</dbReference>
<dbReference type="InterPro" id="IPR001557">
    <property type="entry name" value="L-lactate/malate_DH"/>
</dbReference>
<dbReference type="InterPro" id="IPR022383">
    <property type="entry name" value="Lactate/malate_DH_C"/>
</dbReference>
<dbReference type="InterPro" id="IPR001236">
    <property type="entry name" value="Lactate/malate_DH_N"/>
</dbReference>
<dbReference type="InterPro" id="IPR015955">
    <property type="entry name" value="Lactate_DH/Glyco_Ohase_4_C"/>
</dbReference>
<dbReference type="InterPro" id="IPR001252">
    <property type="entry name" value="Malate_DH_AS"/>
</dbReference>
<dbReference type="InterPro" id="IPR010097">
    <property type="entry name" value="Malate_DH_type1"/>
</dbReference>
<dbReference type="InterPro" id="IPR036291">
    <property type="entry name" value="NAD(P)-bd_dom_sf"/>
</dbReference>
<dbReference type="NCBIfam" id="TIGR01772">
    <property type="entry name" value="MDH_euk_gproteo"/>
    <property type="match status" value="1"/>
</dbReference>
<dbReference type="PANTHER" id="PTHR11540">
    <property type="entry name" value="MALATE AND LACTATE DEHYDROGENASE"/>
    <property type="match status" value="1"/>
</dbReference>
<dbReference type="PANTHER" id="PTHR11540:SF16">
    <property type="entry name" value="MALATE DEHYDROGENASE, MITOCHONDRIAL"/>
    <property type="match status" value="1"/>
</dbReference>
<dbReference type="Pfam" id="PF02866">
    <property type="entry name" value="Ldh_1_C"/>
    <property type="match status" value="1"/>
</dbReference>
<dbReference type="Pfam" id="PF00056">
    <property type="entry name" value="Ldh_1_N"/>
    <property type="match status" value="1"/>
</dbReference>
<dbReference type="PIRSF" id="PIRSF000102">
    <property type="entry name" value="Lac_mal_DH"/>
    <property type="match status" value="1"/>
</dbReference>
<dbReference type="SUPFAM" id="SSF56327">
    <property type="entry name" value="LDH C-terminal domain-like"/>
    <property type="match status" value="1"/>
</dbReference>
<dbReference type="SUPFAM" id="SSF51735">
    <property type="entry name" value="NAD(P)-binding Rossmann-fold domains"/>
    <property type="match status" value="1"/>
</dbReference>
<dbReference type="PROSITE" id="PS00068">
    <property type="entry name" value="MDH"/>
    <property type="match status" value="1"/>
</dbReference>
<keyword id="KW-0007">Acetylation</keyword>
<keyword id="KW-0325">Glycoprotein</keyword>
<keyword id="KW-0496">Mitochondrion</keyword>
<keyword id="KW-0520">NAD</keyword>
<keyword id="KW-0560">Oxidoreductase</keyword>
<keyword id="KW-0597">Phosphoprotein</keyword>
<keyword id="KW-1185">Reference proteome</keyword>
<keyword id="KW-0809">Transit peptide</keyword>
<keyword id="KW-0816">Tricarboxylic acid cycle</keyword>
<protein>
    <recommendedName>
        <fullName>Malate dehydrogenase, mitochondrial</fullName>
        <ecNumber>1.1.1.37</ecNumber>
    </recommendedName>
</protein>
<gene>
    <name type="primary">MDH2</name>
    <name type="ORF">QccE-17106</name>
</gene>